<accession>Q9FGH6</accession>
<keyword id="KW-0050">Antiport</keyword>
<keyword id="KW-0406">Ion transport</keyword>
<keyword id="KW-0472">Membrane</keyword>
<keyword id="KW-0597">Phosphoprotein</keyword>
<keyword id="KW-0630">Potassium</keyword>
<keyword id="KW-0633">Potassium transport</keyword>
<keyword id="KW-1185">Reference proteome</keyword>
<keyword id="KW-0812">Transmembrane</keyword>
<keyword id="KW-1133">Transmembrane helix</keyword>
<keyword id="KW-0813">Transport</keyword>
<reference key="1">
    <citation type="submission" date="1999-04" db="EMBL/GenBank/DDBJ databases">
        <title>Structural analysis of Arabidopsis thaliana chromosome 5. XI.</title>
        <authorList>
            <person name="Kaneko T."/>
            <person name="Katoh T."/>
            <person name="Asamizu E."/>
            <person name="Sato S."/>
            <person name="Nakamura Y."/>
            <person name="Kotani H."/>
            <person name="Tabata S."/>
        </authorList>
    </citation>
    <scope>NUCLEOTIDE SEQUENCE [LARGE SCALE GENOMIC DNA]</scope>
    <source>
        <strain>cv. Columbia</strain>
    </source>
</reference>
<reference key="2">
    <citation type="journal article" date="2017" name="Plant J.">
        <title>Araport11: a complete reannotation of the Arabidopsis thaliana reference genome.</title>
        <authorList>
            <person name="Cheng C.Y."/>
            <person name="Krishnakumar V."/>
            <person name="Chan A.P."/>
            <person name="Thibaud-Nissen F."/>
            <person name="Schobel S."/>
            <person name="Town C.D."/>
        </authorList>
    </citation>
    <scope>GENOME REANNOTATION</scope>
    <source>
        <strain>cv. Columbia</strain>
    </source>
</reference>
<reference key="3">
    <citation type="journal article" date="2001" name="Plant Physiol.">
        <title>Phylogenetic relationships within cation transporter families of Arabidopsis.</title>
        <authorList>
            <person name="Maeser P."/>
            <person name="Thomine S."/>
            <person name="Schroeder J.I."/>
            <person name="Ward J.M."/>
            <person name="Hirschi K."/>
            <person name="Sze H."/>
            <person name="Talke I.N."/>
            <person name="Amtmann A."/>
            <person name="Maathuis F.J.M."/>
            <person name="Sanders D."/>
            <person name="Harper J.F."/>
            <person name="Tchieu J."/>
            <person name="Gribskov M."/>
            <person name="Persans M.W."/>
            <person name="Salt D.E."/>
            <person name="Kim S.A."/>
            <person name="Guerinot M.L."/>
        </authorList>
    </citation>
    <scope>GENE FAMILY</scope>
    <scope>NOMENCLATURE</scope>
</reference>
<reference key="4">
    <citation type="journal article" date="2004" name="Plant Physiol.">
        <title>Expression patterns of a novel AtCHX gene family highlight potential roles in osmotic adjustment and K+ homeostasis in pollen development.</title>
        <authorList>
            <person name="Sze H."/>
            <person name="Padmanaban S."/>
            <person name="Cellier F."/>
            <person name="Honys D."/>
            <person name="Cheng N.-H."/>
            <person name="Bock K.W."/>
            <person name="Conejero G."/>
            <person name="Li X."/>
            <person name="Twell D."/>
            <person name="Ward J.M."/>
            <person name="Hirschi K.D."/>
        </authorList>
    </citation>
    <scope>TISSUE SPECIFICITY</scope>
    <scope>GENE FAMILY</scope>
    <scope>NOMENCLATURE</scope>
</reference>
<sequence>MVRSFPSDGWSALPTRFGFWPENPTTAGVVSSRVFSARLPEVCRQVHDKQPFGMFKGENGMNYTFSTFLIEAILIIFFIKIVYVLLRPLRQPRIVCEIIGGMMIGPSMLGRNRNFNYYLFPPIANYICANIGLMGFFYFFFLTAAKTDVAEIFKAPRKHKYIAAVSVLVPIACVGSTGAALKHKMDIRLQKPSSIGGVTFALGFTSFPVIYTVLRDMNLLNSEIGKFAMSVTLLGDMVGVYVLVLFEAMAQADGGGGAYSVIWFLISAAIMAACLLLVVKRSFEWIVAKTPEGGLVNQNYIVNILMGVLVSCFLTDMFGMAIAVGPIWLGLVVPHGPPLGSTLAIRSETFVNEFLMPFSFALVGQKTNVNLISKETWPKQISPLIYMSIVGFVTKFVSSTGAALFFKVPTRDSLTLGLMMNLRGQIDILLYLHWIDKQMVGLPGYSVMVLYAIVVTGVTAPLISFLYDPTRPYRSSKRRTIQHTPQNTETGLVLAVTDHDTFSGLITFLDFAYPTKTSPFSVFAIQLVELEGRAQPLFIAHDKKREEEYEEEEEPAERMGSRRVDQVQSAFKLYQEKRSECVTMHAYTAHASKHNMYQNICELALTKKTAFILLPYQKERLQDAALTELRDSGMLSVNADVLAHTPCSVCIYYEKGRLKNAMVRSSMDPQHTTNSSHMRQEMYRFVVLFLGGADNREALHLADRMTENPFINLTVIRFLAHNHEGEDEREKKLDDGVVTWFWVKNESNARVSYKEVVVKNGAETLAAIQAMNVNDYDLWITGRREGINPKILEGLSTWSEDHQLGVIGDTVAGSVFASEGSVLVVQQQVRNQMGGDGFLNGKFDYKKLVSPWSHSHN</sequence>
<gene>
    <name type="primary">CHX25</name>
    <name type="ordered locus">At5g58460</name>
    <name type="ORF">MQJ2.3</name>
</gene>
<feature type="chain" id="PRO_0000394994" description="Cation/H(+) antiporter 25">
    <location>
        <begin position="1"/>
        <end position="857"/>
    </location>
</feature>
<feature type="transmembrane region" description="Helical" evidence="3">
    <location>
        <begin position="65"/>
        <end position="85"/>
    </location>
</feature>
<feature type="transmembrane region" description="Helical" evidence="3">
    <location>
        <begin position="93"/>
        <end position="110"/>
    </location>
</feature>
<feature type="transmembrane region" description="Helical" evidence="3">
    <location>
        <begin position="122"/>
        <end position="142"/>
    </location>
</feature>
<feature type="transmembrane region" description="Helical" evidence="3">
    <location>
        <begin position="161"/>
        <end position="181"/>
    </location>
</feature>
<feature type="transmembrane region" description="Helical" evidence="3">
    <location>
        <begin position="194"/>
        <end position="214"/>
    </location>
</feature>
<feature type="transmembrane region" description="Helical" evidence="3">
    <location>
        <begin position="227"/>
        <end position="247"/>
    </location>
</feature>
<feature type="transmembrane region" description="Helical" evidence="3">
    <location>
        <begin position="259"/>
        <end position="279"/>
    </location>
</feature>
<feature type="transmembrane region" description="Helical" evidence="3">
    <location>
        <begin position="313"/>
        <end position="333"/>
    </location>
</feature>
<feature type="transmembrane region" description="Helical" evidence="3">
    <location>
        <begin position="385"/>
        <end position="405"/>
    </location>
</feature>
<feature type="transmembrane region" description="Helical" evidence="3">
    <location>
        <begin position="413"/>
        <end position="435"/>
    </location>
</feature>
<feature type="transmembrane region" description="Helical" evidence="3">
    <location>
        <begin position="447"/>
        <end position="467"/>
    </location>
</feature>
<feature type="modified residue" description="Phosphoserine" evidence="2">
    <location>
        <position position="855"/>
    </location>
</feature>
<organism>
    <name type="scientific">Arabidopsis thaliana</name>
    <name type="common">Mouse-ear cress</name>
    <dbReference type="NCBI Taxonomy" id="3702"/>
    <lineage>
        <taxon>Eukaryota</taxon>
        <taxon>Viridiplantae</taxon>
        <taxon>Streptophyta</taxon>
        <taxon>Embryophyta</taxon>
        <taxon>Tracheophyta</taxon>
        <taxon>Spermatophyta</taxon>
        <taxon>Magnoliopsida</taxon>
        <taxon>eudicotyledons</taxon>
        <taxon>Gunneridae</taxon>
        <taxon>Pentapetalae</taxon>
        <taxon>rosids</taxon>
        <taxon>malvids</taxon>
        <taxon>Brassicales</taxon>
        <taxon>Brassicaceae</taxon>
        <taxon>Camelineae</taxon>
        <taxon>Arabidopsis</taxon>
    </lineage>
</organism>
<evidence type="ECO:0000250" key="1"/>
<evidence type="ECO:0000250" key="2">
    <source>
        <dbReference type="UniProtKB" id="Q9SUQ7"/>
    </source>
</evidence>
<evidence type="ECO:0000255" key="3"/>
<evidence type="ECO:0000269" key="4">
    <source>
    </source>
</evidence>
<evidence type="ECO:0000305" key="5"/>
<comment type="function">
    <text evidence="1">May operate as a cation/H(+) antiporter.</text>
</comment>
<comment type="subcellular location">
    <subcellularLocation>
        <location evidence="1">Membrane</location>
        <topology evidence="1">Multi-pass membrane protein</topology>
    </subcellularLocation>
</comment>
<comment type="tissue specificity">
    <text evidence="4">Specifically expressed in pollen.</text>
</comment>
<comment type="similarity">
    <text evidence="5">Belongs to the monovalent cation:proton antiporter 2 (CPA2) transporter (TC 2.A.37) family. CHX (TC 2.A.37.4) subfamily.</text>
</comment>
<proteinExistence type="evidence at transcript level"/>
<protein>
    <recommendedName>
        <fullName>Cation/H(+) antiporter 25</fullName>
    </recommendedName>
    <alternativeName>
        <fullName>Protein CATION/H+ EXCHANGER 25</fullName>
        <shortName>AtCHX25</shortName>
    </alternativeName>
</protein>
<name>CHX25_ARATH</name>
<dbReference type="EMBL" id="AB025632">
    <property type="protein sequence ID" value="BAB10261.1"/>
    <property type="molecule type" value="Genomic_DNA"/>
</dbReference>
<dbReference type="EMBL" id="CP002688">
    <property type="protein sequence ID" value="AED97055.1"/>
    <property type="molecule type" value="Genomic_DNA"/>
</dbReference>
<dbReference type="RefSeq" id="NP_200654.1">
    <property type="nucleotide sequence ID" value="NM_125232.2"/>
</dbReference>
<dbReference type="SMR" id="Q9FGH6"/>
<dbReference type="STRING" id="3702.Q9FGH6"/>
<dbReference type="PaxDb" id="3702-AT5G58460.1"/>
<dbReference type="ProteomicsDB" id="246972"/>
<dbReference type="EnsemblPlants" id="AT5G58460.1">
    <property type="protein sequence ID" value="AT5G58460.1"/>
    <property type="gene ID" value="AT5G58460"/>
</dbReference>
<dbReference type="GeneID" id="835959"/>
<dbReference type="Gramene" id="AT5G58460.1">
    <property type="protein sequence ID" value="AT5G58460.1"/>
    <property type="gene ID" value="AT5G58460"/>
</dbReference>
<dbReference type="KEGG" id="ath:AT5G58460"/>
<dbReference type="Araport" id="AT5G58460"/>
<dbReference type="TAIR" id="AT5G58460">
    <property type="gene designation" value="CHX25"/>
</dbReference>
<dbReference type="eggNOG" id="KOG1650">
    <property type="taxonomic scope" value="Eukaryota"/>
</dbReference>
<dbReference type="HOGENOM" id="CLU_005126_6_2_1"/>
<dbReference type="InParanoid" id="Q9FGH6"/>
<dbReference type="OMA" id="FFKIPTR"/>
<dbReference type="OrthoDB" id="1861329at2759"/>
<dbReference type="PhylomeDB" id="Q9FGH6"/>
<dbReference type="PRO" id="PR:Q9FGH6"/>
<dbReference type="Proteomes" id="UP000006548">
    <property type="component" value="Chromosome 5"/>
</dbReference>
<dbReference type="ExpressionAtlas" id="Q9FGH6">
    <property type="expression patterns" value="baseline and differential"/>
</dbReference>
<dbReference type="GO" id="GO:0016020">
    <property type="term" value="C:membrane"/>
    <property type="evidence" value="ECO:0007669"/>
    <property type="project" value="UniProtKB-SubCell"/>
</dbReference>
<dbReference type="GO" id="GO:0015297">
    <property type="term" value="F:antiporter activity"/>
    <property type="evidence" value="ECO:0007669"/>
    <property type="project" value="UniProtKB-KW"/>
</dbReference>
<dbReference type="GO" id="GO:0006813">
    <property type="term" value="P:potassium ion transport"/>
    <property type="evidence" value="ECO:0007669"/>
    <property type="project" value="UniProtKB-KW"/>
</dbReference>
<dbReference type="GO" id="GO:1902600">
    <property type="term" value="P:proton transmembrane transport"/>
    <property type="evidence" value="ECO:0007669"/>
    <property type="project" value="InterPro"/>
</dbReference>
<dbReference type="FunFam" id="1.20.1530.20:FF:000022">
    <property type="entry name" value="Cation/H(+) antiporter 24"/>
    <property type="match status" value="1"/>
</dbReference>
<dbReference type="Gene3D" id="1.20.1530.20">
    <property type="match status" value="1"/>
</dbReference>
<dbReference type="InterPro" id="IPR006153">
    <property type="entry name" value="Cation/H_exchanger_TM"/>
</dbReference>
<dbReference type="InterPro" id="IPR050794">
    <property type="entry name" value="CPA2_transporter"/>
</dbReference>
<dbReference type="InterPro" id="IPR038770">
    <property type="entry name" value="Na+/solute_symporter_sf"/>
</dbReference>
<dbReference type="PANTHER" id="PTHR32468">
    <property type="entry name" value="CATION/H + ANTIPORTER"/>
    <property type="match status" value="1"/>
</dbReference>
<dbReference type="PANTHER" id="PTHR32468:SF109">
    <property type="entry name" value="CATION_H(+) ANTIPORTER 24-RELATED"/>
    <property type="match status" value="1"/>
</dbReference>
<dbReference type="Pfam" id="PF23256">
    <property type="entry name" value="CHX17_2nd"/>
    <property type="match status" value="1"/>
</dbReference>
<dbReference type="Pfam" id="PF00999">
    <property type="entry name" value="Na_H_Exchanger"/>
    <property type="match status" value="1"/>
</dbReference>